<feature type="chain" id="PRO_0000231537" description="Deoxyribose-phosphate aldolase">
    <location>
        <begin position="1"/>
        <end position="218"/>
    </location>
</feature>
<feature type="active site" description="Proton donor/acceptor" evidence="1">
    <location>
        <position position="89"/>
    </location>
</feature>
<feature type="active site" description="Schiff-base intermediate with acetaldehyde" evidence="1">
    <location>
        <position position="152"/>
    </location>
</feature>
<feature type="active site" description="Proton donor/acceptor" evidence="1">
    <location>
        <position position="182"/>
    </location>
</feature>
<accession>Q6NJX0</accession>
<comment type="function">
    <text evidence="1">Catalyzes a reversible aldol reaction between acetaldehyde and D-glyceraldehyde 3-phosphate to generate 2-deoxy-D-ribose 5-phosphate.</text>
</comment>
<comment type="catalytic activity">
    <reaction evidence="1">
        <text>2-deoxy-D-ribose 5-phosphate = D-glyceraldehyde 3-phosphate + acetaldehyde</text>
        <dbReference type="Rhea" id="RHEA:12821"/>
        <dbReference type="ChEBI" id="CHEBI:15343"/>
        <dbReference type="ChEBI" id="CHEBI:59776"/>
        <dbReference type="ChEBI" id="CHEBI:62877"/>
        <dbReference type="EC" id="4.1.2.4"/>
    </reaction>
</comment>
<comment type="pathway">
    <text evidence="1">Carbohydrate degradation; 2-deoxy-D-ribose 1-phosphate degradation; D-glyceraldehyde 3-phosphate and acetaldehyde from 2-deoxy-alpha-D-ribose 1-phosphate: step 2/2.</text>
</comment>
<comment type="subcellular location">
    <subcellularLocation>
        <location evidence="1">Cytoplasm</location>
    </subcellularLocation>
</comment>
<comment type="similarity">
    <text evidence="1">Belongs to the DeoC/FbaB aldolase family. DeoC type 1 subfamily.</text>
</comment>
<organism>
    <name type="scientific">Corynebacterium diphtheriae (strain ATCC 700971 / NCTC 13129 / Biotype gravis)</name>
    <dbReference type="NCBI Taxonomy" id="257309"/>
    <lineage>
        <taxon>Bacteria</taxon>
        <taxon>Bacillati</taxon>
        <taxon>Actinomycetota</taxon>
        <taxon>Actinomycetes</taxon>
        <taxon>Mycobacteriales</taxon>
        <taxon>Corynebacteriaceae</taxon>
        <taxon>Corynebacterium</taxon>
    </lineage>
</organism>
<reference key="1">
    <citation type="journal article" date="2003" name="Nucleic Acids Res.">
        <title>The complete genome sequence and analysis of Corynebacterium diphtheriae NCTC13129.</title>
        <authorList>
            <person name="Cerdeno-Tarraga A.-M."/>
            <person name="Efstratiou A."/>
            <person name="Dover L.G."/>
            <person name="Holden M.T.G."/>
            <person name="Pallen M.J."/>
            <person name="Bentley S.D."/>
            <person name="Besra G.S."/>
            <person name="Churcher C.M."/>
            <person name="James K.D."/>
            <person name="De Zoysa A."/>
            <person name="Chillingworth T."/>
            <person name="Cronin A."/>
            <person name="Dowd L."/>
            <person name="Feltwell T."/>
            <person name="Hamlin N."/>
            <person name="Holroyd S."/>
            <person name="Jagels K."/>
            <person name="Moule S."/>
            <person name="Quail M.A."/>
            <person name="Rabbinowitsch E."/>
            <person name="Rutherford K.M."/>
            <person name="Thomson N.R."/>
            <person name="Unwin L."/>
            <person name="Whitehead S."/>
            <person name="Barrell B.G."/>
            <person name="Parkhill J."/>
        </authorList>
    </citation>
    <scope>NUCLEOTIDE SEQUENCE [LARGE SCALE GENOMIC DNA]</scope>
    <source>
        <strain>ATCC 700971 / NCTC 13129 / Biotype gravis</strain>
    </source>
</reference>
<evidence type="ECO:0000255" key="1">
    <source>
        <dbReference type="HAMAP-Rule" id="MF_00114"/>
    </source>
</evidence>
<protein>
    <recommendedName>
        <fullName evidence="1">Deoxyribose-phosphate aldolase</fullName>
        <shortName evidence="1">DERA</shortName>
        <ecNumber evidence="1">4.1.2.4</ecNumber>
    </recommendedName>
    <alternativeName>
        <fullName evidence="1">2-deoxy-D-ribose 5-phosphate aldolase</fullName>
    </alternativeName>
    <alternativeName>
        <fullName evidence="1">Phosphodeoxyriboaldolase</fullName>
        <shortName evidence="1">Deoxyriboaldolase</shortName>
    </alternativeName>
</protein>
<keyword id="KW-0963">Cytoplasm</keyword>
<keyword id="KW-0456">Lyase</keyword>
<keyword id="KW-1185">Reference proteome</keyword>
<keyword id="KW-0704">Schiff base</keyword>
<dbReference type="EC" id="4.1.2.4" evidence="1"/>
<dbReference type="EMBL" id="BX248354">
    <property type="protein sequence ID" value="CAE48777.1"/>
    <property type="molecule type" value="Genomic_DNA"/>
</dbReference>
<dbReference type="RefSeq" id="WP_010934166.1">
    <property type="nucleotide sequence ID" value="NC_002935.2"/>
</dbReference>
<dbReference type="SMR" id="Q6NJX0"/>
<dbReference type="STRING" id="257309.DIP0273"/>
<dbReference type="KEGG" id="cdi:DIP0273"/>
<dbReference type="HOGENOM" id="CLU_053595_0_0_11"/>
<dbReference type="UniPathway" id="UPA00002">
    <property type="reaction ID" value="UER00468"/>
</dbReference>
<dbReference type="Proteomes" id="UP000002198">
    <property type="component" value="Chromosome"/>
</dbReference>
<dbReference type="GO" id="GO:0005737">
    <property type="term" value="C:cytoplasm"/>
    <property type="evidence" value="ECO:0007669"/>
    <property type="project" value="UniProtKB-SubCell"/>
</dbReference>
<dbReference type="GO" id="GO:0004139">
    <property type="term" value="F:deoxyribose-phosphate aldolase activity"/>
    <property type="evidence" value="ECO:0007669"/>
    <property type="project" value="UniProtKB-UniRule"/>
</dbReference>
<dbReference type="GO" id="GO:0006018">
    <property type="term" value="P:2-deoxyribose 1-phosphate catabolic process"/>
    <property type="evidence" value="ECO:0007669"/>
    <property type="project" value="UniProtKB-UniRule"/>
</dbReference>
<dbReference type="GO" id="GO:0016052">
    <property type="term" value="P:carbohydrate catabolic process"/>
    <property type="evidence" value="ECO:0007669"/>
    <property type="project" value="TreeGrafter"/>
</dbReference>
<dbReference type="GO" id="GO:0009264">
    <property type="term" value="P:deoxyribonucleotide catabolic process"/>
    <property type="evidence" value="ECO:0007669"/>
    <property type="project" value="InterPro"/>
</dbReference>
<dbReference type="CDD" id="cd00959">
    <property type="entry name" value="DeoC"/>
    <property type="match status" value="1"/>
</dbReference>
<dbReference type="FunFam" id="3.20.20.70:FF:000044">
    <property type="entry name" value="Deoxyribose-phosphate aldolase"/>
    <property type="match status" value="1"/>
</dbReference>
<dbReference type="Gene3D" id="3.20.20.70">
    <property type="entry name" value="Aldolase class I"/>
    <property type="match status" value="1"/>
</dbReference>
<dbReference type="HAMAP" id="MF_00114">
    <property type="entry name" value="DeoC_type1"/>
    <property type="match status" value="1"/>
</dbReference>
<dbReference type="InterPro" id="IPR013785">
    <property type="entry name" value="Aldolase_TIM"/>
</dbReference>
<dbReference type="InterPro" id="IPR011343">
    <property type="entry name" value="DeoC"/>
</dbReference>
<dbReference type="InterPro" id="IPR002915">
    <property type="entry name" value="DeoC/FbaB/LacD_aldolase"/>
</dbReference>
<dbReference type="InterPro" id="IPR028581">
    <property type="entry name" value="DeoC_typeI"/>
</dbReference>
<dbReference type="NCBIfam" id="TIGR00126">
    <property type="entry name" value="deoC"/>
    <property type="match status" value="1"/>
</dbReference>
<dbReference type="PANTHER" id="PTHR10889">
    <property type="entry name" value="DEOXYRIBOSE-PHOSPHATE ALDOLASE"/>
    <property type="match status" value="1"/>
</dbReference>
<dbReference type="PANTHER" id="PTHR10889:SF1">
    <property type="entry name" value="DEOXYRIBOSE-PHOSPHATE ALDOLASE"/>
    <property type="match status" value="1"/>
</dbReference>
<dbReference type="Pfam" id="PF01791">
    <property type="entry name" value="DeoC"/>
    <property type="match status" value="1"/>
</dbReference>
<dbReference type="PIRSF" id="PIRSF001357">
    <property type="entry name" value="DeoC"/>
    <property type="match status" value="1"/>
</dbReference>
<dbReference type="SMART" id="SM01133">
    <property type="entry name" value="DeoC"/>
    <property type="match status" value="1"/>
</dbReference>
<dbReference type="SUPFAM" id="SSF51569">
    <property type="entry name" value="Aldolase"/>
    <property type="match status" value="1"/>
</dbReference>
<name>DEOC_CORDI</name>
<gene>
    <name evidence="1" type="primary">deoC</name>
    <name type="ordered locus">DIP0273</name>
</gene>
<sequence length="218" mass="22352">MTTRNDVAQMIDHTLLKPEATTDDFKALIADAVRLGTYSVCVSPSALPVEVPENLHVATVVGFPSGAVKPEIKAAEAARTVADGAEEVDMVINIALAKEGKFDELEAEIKAVRDAVPAPGILKVILETAALTDDEIVAACKASENAGADFVKTSTGFHPAGGASVHAVEIMHATVGGRLGIKASGGIRTAKDALAMIEAGATRLGLSASAAILEELGE</sequence>
<proteinExistence type="inferred from homology"/>